<proteinExistence type="inferred from homology"/>
<name>SSTT_PSEPW</name>
<reference key="1">
    <citation type="submission" date="2008-02" db="EMBL/GenBank/DDBJ databases">
        <title>Complete sequence of Pseudomonas putida W619.</title>
        <authorList>
            <person name="Copeland A."/>
            <person name="Lucas S."/>
            <person name="Lapidus A."/>
            <person name="Barry K."/>
            <person name="Detter J.C."/>
            <person name="Glavina del Rio T."/>
            <person name="Dalin E."/>
            <person name="Tice H."/>
            <person name="Pitluck S."/>
            <person name="Chain P."/>
            <person name="Malfatti S."/>
            <person name="Shin M."/>
            <person name="Vergez L."/>
            <person name="Schmutz J."/>
            <person name="Larimer F."/>
            <person name="Land M."/>
            <person name="Hauser L."/>
            <person name="Kyrpides N."/>
            <person name="Kim E."/>
            <person name="Taghavi S."/>
            <person name="Vangronsveld D."/>
            <person name="van der Lelie D."/>
            <person name="Richardson P."/>
        </authorList>
    </citation>
    <scope>NUCLEOTIDE SEQUENCE [LARGE SCALE GENOMIC DNA]</scope>
    <source>
        <strain>W619</strain>
    </source>
</reference>
<keyword id="KW-0029">Amino-acid transport</keyword>
<keyword id="KW-0997">Cell inner membrane</keyword>
<keyword id="KW-1003">Cell membrane</keyword>
<keyword id="KW-0472">Membrane</keyword>
<keyword id="KW-0769">Symport</keyword>
<keyword id="KW-0812">Transmembrane</keyword>
<keyword id="KW-1133">Transmembrane helix</keyword>
<keyword id="KW-0813">Transport</keyword>
<dbReference type="EMBL" id="CP000949">
    <property type="protein sequence ID" value="ACA73673.1"/>
    <property type="molecule type" value="Genomic_DNA"/>
</dbReference>
<dbReference type="SMR" id="B1JAB5"/>
<dbReference type="STRING" id="390235.PputW619_3183"/>
<dbReference type="KEGG" id="ppw:PputW619_3183"/>
<dbReference type="eggNOG" id="COG3633">
    <property type="taxonomic scope" value="Bacteria"/>
</dbReference>
<dbReference type="HOGENOM" id="CLU_044581_0_0_6"/>
<dbReference type="OrthoDB" id="9768885at2"/>
<dbReference type="GO" id="GO:0005886">
    <property type="term" value="C:plasma membrane"/>
    <property type="evidence" value="ECO:0007669"/>
    <property type="project" value="UniProtKB-SubCell"/>
</dbReference>
<dbReference type="GO" id="GO:0005295">
    <property type="term" value="F:neutral L-amino acid:sodium symporter activity"/>
    <property type="evidence" value="ECO:0007669"/>
    <property type="project" value="TreeGrafter"/>
</dbReference>
<dbReference type="GO" id="GO:0032329">
    <property type="term" value="P:serine transport"/>
    <property type="evidence" value="ECO:0007669"/>
    <property type="project" value="InterPro"/>
</dbReference>
<dbReference type="GO" id="GO:0015826">
    <property type="term" value="P:threonine transport"/>
    <property type="evidence" value="ECO:0007669"/>
    <property type="project" value="InterPro"/>
</dbReference>
<dbReference type="FunFam" id="1.10.3860.10:FF:000003">
    <property type="entry name" value="Serine/threonine transporter sstT"/>
    <property type="match status" value="1"/>
</dbReference>
<dbReference type="Gene3D" id="1.10.3860.10">
    <property type="entry name" value="Sodium:dicarboxylate symporter"/>
    <property type="match status" value="1"/>
</dbReference>
<dbReference type="HAMAP" id="MF_01582">
    <property type="entry name" value="Ser_Thr_transp_SstT"/>
    <property type="match status" value="1"/>
</dbReference>
<dbReference type="InterPro" id="IPR001991">
    <property type="entry name" value="Na-dicarboxylate_symporter"/>
</dbReference>
<dbReference type="InterPro" id="IPR036458">
    <property type="entry name" value="Na:dicarbo_symporter_sf"/>
</dbReference>
<dbReference type="InterPro" id="IPR023025">
    <property type="entry name" value="Ser_Thr_transp_SstT"/>
</dbReference>
<dbReference type="NCBIfam" id="NF010151">
    <property type="entry name" value="PRK13628.1"/>
    <property type="match status" value="1"/>
</dbReference>
<dbReference type="PANTHER" id="PTHR42865">
    <property type="entry name" value="PROTON/GLUTAMATE-ASPARTATE SYMPORTER"/>
    <property type="match status" value="1"/>
</dbReference>
<dbReference type="PANTHER" id="PTHR42865:SF8">
    <property type="entry name" value="SERINE_THREONINE TRANSPORTER SSTT"/>
    <property type="match status" value="1"/>
</dbReference>
<dbReference type="Pfam" id="PF00375">
    <property type="entry name" value="SDF"/>
    <property type="match status" value="1"/>
</dbReference>
<dbReference type="PRINTS" id="PR00173">
    <property type="entry name" value="EDTRNSPORT"/>
</dbReference>
<dbReference type="SUPFAM" id="SSF118215">
    <property type="entry name" value="Proton glutamate symport protein"/>
    <property type="match status" value="1"/>
</dbReference>
<feature type="chain" id="PRO_1000197557" description="Serine/threonine transporter SstT">
    <location>
        <begin position="1"/>
        <end position="403"/>
    </location>
</feature>
<feature type="transmembrane region" description="Helical" evidence="1">
    <location>
        <begin position="16"/>
        <end position="36"/>
    </location>
</feature>
<feature type="transmembrane region" description="Helical" evidence="1">
    <location>
        <begin position="45"/>
        <end position="65"/>
    </location>
</feature>
<feature type="transmembrane region" description="Helical" evidence="1">
    <location>
        <begin position="79"/>
        <end position="99"/>
    </location>
</feature>
<feature type="transmembrane region" description="Helical" evidence="1">
    <location>
        <begin position="138"/>
        <end position="158"/>
    </location>
</feature>
<feature type="transmembrane region" description="Helical" evidence="1">
    <location>
        <begin position="175"/>
        <end position="195"/>
    </location>
</feature>
<feature type="transmembrane region" description="Helical" evidence="1">
    <location>
        <begin position="214"/>
        <end position="234"/>
    </location>
</feature>
<feature type="transmembrane region" description="Helical" evidence="1">
    <location>
        <begin position="295"/>
        <end position="315"/>
    </location>
</feature>
<feature type="transmembrane region" description="Helical" evidence="1">
    <location>
        <begin position="327"/>
        <end position="347"/>
    </location>
</feature>
<feature type="transmembrane region" description="Helical" evidence="1">
    <location>
        <begin position="353"/>
        <end position="373"/>
    </location>
</feature>
<protein>
    <recommendedName>
        <fullName evidence="1">Serine/threonine transporter SstT</fullName>
    </recommendedName>
    <alternativeName>
        <fullName evidence="1">Na(+)/serine-threonine symporter</fullName>
    </alternativeName>
</protein>
<evidence type="ECO:0000255" key="1">
    <source>
        <dbReference type="HAMAP-Rule" id="MF_01582"/>
    </source>
</evidence>
<accession>B1JAB5</accession>
<gene>
    <name evidence="1" type="primary">sstT</name>
    <name type="ordered locus">PputW619_3183</name>
</gene>
<sequence length="403" mass="41773">MSPLLRVLNRTSLVTQIVIGLIAGIALALLAPAIALDLGFLGKVFVSALKAVAPVLVFILVMASIANHRHGQETHIRPILWLYLLGTFSAAVVAVVASMLFPSQLALSAGDVTLSAPGGIGEVLQNLVLSAVDNPINALLNANFIGVLTWAIGLGVALRHAGETTRTVVEDLSNGVTLIVRVVIRFAPLGIFGLVSSTLAQSGLDALLGYLHLLAVLIGCMLFVALVMNPLIVFWKIRRNPYPLTLLCLRESGITAFFTRSSAANIPVNLALSERLGLHEDTYSVSIPLGATINMAGAAITITVLTLAAVHTLGIPVDLPTAVLLSMVAAVCACGASGVAGGSLLLIPLACSLFGIPSEIAMQVVAVGFIIGVLQDSAETALNSSTDVLFTAAACQAQERRSA</sequence>
<comment type="function">
    <text evidence="1">Involved in the import of serine and threonine into the cell, with the concomitant import of sodium (symport system).</text>
</comment>
<comment type="catalytic activity">
    <reaction evidence="1">
        <text>L-serine(in) + Na(+)(in) = L-serine(out) + Na(+)(out)</text>
        <dbReference type="Rhea" id="RHEA:29575"/>
        <dbReference type="ChEBI" id="CHEBI:29101"/>
        <dbReference type="ChEBI" id="CHEBI:33384"/>
    </reaction>
    <physiologicalReaction direction="right-to-left" evidence="1">
        <dbReference type="Rhea" id="RHEA:29577"/>
    </physiologicalReaction>
</comment>
<comment type="catalytic activity">
    <reaction evidence="1">
        <text>L-threonine(in) + Na(+)(in) = L-threonine(out) + Na(+)(out)</text>
        <dbReference type="Rhea" id="RHEA:69999"/>
        <dbReference type="ChEBI" id="CHEBI:29101"/>
        <dbReference type="ChEBI" id="CHEBI:57926"/>
    </reaction>
    <physiologicalReaction direction="right-to-left" evidence="1">
        <dbReference type="Rhea" id="RHEA:70001"/>
    </physiologicalReaction>
</comment>
<comment type="subcellular location">
    <subcellularLocation>
        <location evidence="1">Cell inner membrane</location>
        <topology evidence="1">Multi-pass membrane protein</topology>
    </subcellularLocation>
</comment>
<comment type="similarity">
    <text evidence="1">Belongs to the dicarboxylate/amino acid:cation symporter (DAACS) (TC 2.A.23) family.</text>
</comment>
<organism>
    <name type="scientific">Pseudomonas putida (strain W619)</name>
    <dbReference type="NCBI Taxonomy" id="390235"/>
    <lineage>
        <taxon>Bacteria</taxon>
        <taxon>Pseudomonadati</taxon>
        <taxon>Pseudomonadota</taxon>
        <taxon>Gammaproteobacteria</taxon>
        <taxon>Pseudomonadales</taxon>
        <taxon>Pseudomonadaceae</taxon>
        <taxon>Pseudomonas</taxon>
    </lineage>
</organism>